<keyword id="KW-0687">Ribonucleoprotein</keyword>
<keyword id="KW-0689">Ribosomal protein</keyword>
<keyword id="KW-0694">RNA-binding</keyword>
<keyword id="KW-0699">rRNA-binding</keyword>
<comment type="function">
    <text evidence="1">Binds as a heterodimer with protein bS6 to the central domain of the 16S rRNA, where it helps stabilize the platform of the 30S subunit.</text>
</comment>
<comment type="subunit">
    <text evidence="1">Part of the 30S ribosomal subunit. Forms a tight heterodimer with protein bS6.</text>
</comment>
<comment type="similarity">
    <text evidence="1">Belongs to the bacterial ribosomal protein bS18 family.</text>
</comment>
<name>RS18_ALTMD</name>
<proteinExistence type="inferred from homology"/>
<accession>B4S011</accession>
<accession>F2G9R3</accession>
<feature type="chain" id="PRO_1000114395" description="Small ribosomal subunit protein bS18">
    <location>
        <begin position="1"/>
        <end position="75"/>
    </location>
</feature>
<dbReference type="EMBL" id="CP001103">
    <property type="protein sequence ID" value="AEA99913.1"/>
    <property type="molecule type" value="Genomic_DNA"/>
</dbReference>
<dbReference type="RefSeq" id="WP_012519954.1">
    <property type="nucleotide sequence ID" value="NC_011138.3"/>
</dbReference>
<dbReference type="SMR" id="B4S011"/>
<dbReference type="GeneID" id="78256700"/>
<dbReference type="KEGG" id="amc:MADE_1018945"/>
<dbReference type="HOGENOM" id="CLU_148710_2_3_6"/>
<dbReference type="Proteomes" id="UP000001870">
    <property type="component" value="Chromosome"/>
</dbReference>
<dbReference type="GO" id="GO:0022627">
    <property type="term" value="C:cytosolic small ribosomal subunit"/>
    <property type="evidence" value="ECO:0007669"/>
    <property type="project" value="TreeGrafter"/>
</dbReference>
<dbReference type="GO" id="GO:0070181">
    <property type="term" value="F:small ribosomal subunit rRNA binding"/>
    <property type="evidence" value="ECO:0007669"/>
    <property type="project" value="TreeGrafter"/>
</dbReference>
<dbReference type="GO" id="GO:0003735">
    <property type="term" value="F:structural constituent of ribosome"/>
    <property type="evidence" value="ECO:0007669"/>
    <property type="project" value="InterPro"/>
</dbReference>
<dbReference type="GO" id="GO:0006412">
    <property type="term" value="P:translation"/>
    <property type="evidence" value="ECO:0007669"/>
    <property type="project" value="UniProtKB-UniRule"/>
</dbReference>
<dbReference type="FunFam" id="4.10.640.10:FF:000001">
    <property type="entry name" value="30S ribosomal protein S18"/>
    <property type="match status" value="1"/>
</dbReference>
<dbReference type="Gene3D" id="4.10.640.10">
    <property type="entry name" value="Ribosomal protein S18"/>
    <property type="match status" value="1"/>
</dbReference>
<dbReference type="HAMAP" id="MF_00270">
    <property type="entry name" value="Ribosomal_bS18"/>
    <property type="match status" value="1"/>
</dbReference>
<dbReference type="InterPro" id="IPR001648">
    <property type="entry name" value="Ribosomal_bS18"/>
</dbReference>
<dbReference type="InterPro" id="IPR018275">
    <property type="entry name" value="Ribosomal_bS18_CS"/>
</dbReference>
<dbReference type="InterPro" id="IPR036870">
    <property type="entry name" value="Ribosomal_bS18_sf"/>
</dbReference>
<dbReference type="NCBIfam" id="TIGR00165">
    <property type="entry name" value="S18"/>
    <property type="match status" value="1"/>
</dbReference>
<dbReference type="PANTHER" id="PTHR13479">
    <property type="entry name" value="30S RIBOSOMAL PROTEIN S18"/>
    <property type="match status" value="1"/>
</dbReference>
<dbReference type="PANTHER" id="PTHR13479:SF40">
    <property type="entry name" value="SMALL RIBOSOMAL SUBUNIT PROTEIN BS18M"/>
    <property type="match status" value="1"/>
</dbReference>
<dbReference type="Pfam" id="PF01084">
    <property type="entry name" value="Ribosomal_S18"/>
    <property type="match status" value="1"/>
</dbReference>
<dbReference type="PRINTS" id="PR00974">
    <property type="entry name" value="RIBOSOMALS18"/>
</dbReference>
<dbReference type="SUPFAM" id="SSF46911">
    <property type="entry name" value="Ribosomal protein S18"/>
    <property type="match status" value="1"/>
</dbReference>
<dbReference type="PROSITE" id="PS00057">
    <property type="entry name" value="RIBOSOMAL_S18"/>
    <property type="match status" value="1"/>
</dbReference>
<organism>
    <name type="scientific">Alteromonas mediterranea (strain DSM 17117 / CIP 110805 / LMG 28347 / Deep ecotype)</name>
    <dbReference type="NCBI Taxonomy" id="1774373"/>
    <lineage>
        <taxon>Bacteria</taxon>
        <taxon>Pseudomonadati</taxon>
        <taxon>Pseudomonadota</taxon>
        <taxon>Gammaproteobacteria</taxon>
        <taxon>Alteromonadales</taxon>
        <taxon>Alteromonadaceae</taxon>
        <taxon>Alteromonas/Salinimonas group</taxon>
        <taxon>Alteromonas</taxon>
    </lineage>
</organism>
<gene>
    <name evidence="1" type="primary">rpsR</name>
    <name type="ordered locus">MADE_1018945</name>
</gene>
<sequence length="75" mass="8720">MARFFRRRKFCRFTAEGVTEIDYKDIATLKNYITESGKIVPSRITGTSAKYQRQLSSAIKRARFLALLPYTDSHK</sequence>
<protein>
    <recommendedName>
        <fullName evidence="1">Small ribosomal subunit protein bS18</fullName>
    </recommendedName>
    <alternativeName>
        <fullName evidence="2">30S ribosomal protein S18</fullName>
    </alternativeName>
</protein>
<evidence type="ECO:0000255" key="1">
    <source>
        <dbReference type="HAMAP-Rule" id="MF_00270"/>
    </source>
</evidence>
<evidence type="ECO:0000305" key="2"/>
<reference key="1">
    <citation type="journal article" date="2008" name="ISME J.">
        <title>Comparative genomics of two ecotypes of the marine planktonic copiotroph Alteromonas macleodii suggests alternative lifestyles associated with different kinds of particulate organic matter.</title>
        <authorList>
            <person name="Ivars-Martinez E."/>
            <person name="Martin-Cuadrado A.-B."/>
            <person name="D'Auria G."/>
            <person name="Mira A."/>
            <person name="Ferriera S."/>
            <person name="Johnson J."/>
            <person name="Friedman R."/>
            <person name="Rodriguez-Valera F."/>
        </authorList>
    </citation>
    <scope>NUCLEOTIDE SEQUENCE [LARGE SCALE GENOMIC DNA]</scope>
    <source>
        <strain>DSM 17117 / CIP 110805 / LMG 28347 / Deep ecotype</strain>
    </source>
</reference>